<proteinExistence type="inferred from homology"/>
<gene>
    <name type="primary">SYF2</name>
    <name type="ordered locus">KLLA0E04565g</name>
</gene>
<name>SYF2_KLULA</name>
<feature type="chain" id="PRO_0000072376" description="Pre-mRNA-splicing factor SYF2">
    <location>
        <begin position="1"/>
        <end position="221"/>
    </location>
</feature>
<feature type="region of interest" description="Disordered" evidence="3">
    <location>
        <begin position="72"/>
        <end position="98"/>
    </location>
</feature>
<feature type="coiled-coil region" evidence="2">
    <location>
        <begin position="34"/>
        <end position="63"/>
    </location>
</feature>
<feature type="compositionally biased region" description="Basic and acidic residues" evidence="3">
    <location>
        <begin position="85"/>
        <end position="98"/>
    </location>
</feature>
<accession>Q6CPI4</accession>
<protein>
    <recommendedName>
        <fullName>Pre-mRNA-splicing factor SYF2</fullName>
    </recommendedName>
</protein>
<reference key="1">
    <citation type="journal article" date="2004" name="Nature">
        <title>Genome evolution in yeasts.</title>
        <authorList>
            <person name="Dujon B."/>
            <person name="Sherman D."/>
            <person name="Fischer G."/>
            <person name="Durrens P."/>
            <person name="Casaregola S."/>
            <person name="Lafontaine I."/>
            <person name="de Montigny J."/>
            <person name="Marck C."/>
            <person name="Neuveglise C."/>
            <person name="Talla E."/>
            <person name="Goffard N."/>
            <person name="Frangeul L."/>
            <person name="Aigle M."/>
            <person name="Anthouard V."/>
            <person name="Babour A."/>
            <person name="Barbe V."/>
            <person name="Barnay S."/>
            <person name="Blanchin S."/>
            <person name="Beckerich J.-M."/>
            <person name="Beyne E."/>
            <person name="Bleykasten C."/>
            <person name="Boisrame A."/>
            <person name="Boyer J."/>
            <person name="Cattolico L."/>
            <person name="Confanioleri F."/>
            <person name="de Daruvar A."/>
            <person name="Despons L."/>
            <person name="Fabre E."/>
            <person name="Fairhead C."/>
            <person name="Ferry-Dumazet H."/>
            <person name="Groppi A."/>
            <person name="Hantraye F."/>
            <person name="Hennequin C."/>
            <person name="Jauniaux N."/>
            <person name="Joyet P."/>
            <person name="Kachouri R."/>
            <person name="Kerrest A."/>
            <person name="Koszul R."/>
            <person name="Lemaire M."/>
            <person name="Lesur I."/>
            <person name="Ma L."/>
            <person name="Muller H."/>
            <person name="Nicaud J.-M."/>
            <person name="Nikolski M."/>
            <person name="Oztas S."/>
            <person name="Ozier-Kalogeropoulos O."/>
            <person name="Pellenz S."/>
            <person name="Potier S."/>
            <person name="Richard G.-F."/>
            <person name="Straub M.-L."/>
            <person name="Suleau A."/>
            <person name="Swennen D."/>
            <person name="Tekaia F."/>
            <person name="Wesolowski-Louvel M."/>
            <person name="Westhof E."/>
            <person name="Wirth B."/>
            <person name="Zeniou-Meyer M."/>
            <person name="Zivanovic Y."/>
            <person name="Bolotin-Fukuhara M."/>
            <person name="Thierry A."/>
            <person name="Bouchier C."/>
            <person name="Caudron B."/>
            <person name="Scarpelli C."/>
            <person name="Gaillardin C."/>
            <person name="Weissenbach J."/>
            <person name="Wincker P."/>
            <person name="Souciet J.-L."/>
        </authorList>
    </citation>
    <scope>NUCLEOTIDE SEQUENCE [LARGE SCALE GENOMIC DNA]</scope>
    <source>
        <strain>ATCC 8585 / CBS 2359 / DSM 70799 / NBRC 1267 / NRRL Y-1140 / WM37</strain>
    </source>
</reference>
<evidence type="ECO:0000250" key="1"/>
<evidence type="ECO:0000255" key="2"/>
<evidence type="ECO:0000256" key="3">
    <source>
        <dbReference type="SAM" id="MobiDB-lite"/>
    </source>
</evidence>
<evidence type="ECO:0000305" key="4"/>
<dbReference type="EMBL" id="CR382125">
    <property type="protein sequence ID" value="CAG99242.1"/>
    <property type="molecule type" value="Genomic_DNA"/>
</dbReference>
<dbReference type="RefSeq" id="XP_454155.1">
    <property type="nucleotide sequence ID" value="XM_454155.1"/>
</dbReference>
<dbReference type="SMR" id="Q6CPI4"/>
<dbReference type="FunCoup" id="Q6CPI4">
    <property type="interactions" value="176"/>
</dbReference>
<dbReference type="STRING" id="284590.Q6CPI4"/>
<dbReference type="PaxDb" id="284590-Q6CPI4"/>
<dbReference type="KEGG" id="kla:KLLA0_E04643g"/>
<dbReference type="eggNOG" id="KOG2609">
    <property type="taxonomic scope" value="Eukaryota"/>
</dbReference>
<dbReference type="HOGENOM" id="CLU_114239_0_0_1"/>
<dbReference type="InParanoid" id="Q6CPI4"/>
<dbReference type="OMA" id="KLMNYTL"/>
<dbReference type="Proteomes" id="UP000000598">
    <property type="component" value="Chromosome E"/>
</dbReference>
<dbReference type="GO" id="GO:0005681">
    <property type="term" value="C:spliceosomal complex"/>
    <property type="evidence" value="ECO:0007669"/>
    <property type="project" value="UniProtKB-KW"/>
</dbReference>
<dbReference type="GO" id="GO:0006397">
    <property type="term" value="P:mRNA processing"/>
    <property type="evidence" value="ECO:0007669"/>
    <property type="project" value="UniProtKB-KW"/>
</dbReference>
<dbReference type="GO" id="GO:0008380">
    <property type="term" value="P:RNA splicing"/>
    <property type="evidence" value="ECO:0007669"/>
    <property type="project" value="UniProtKB-KW"/>
</dbReference>
<dbReference type="InterPro" id="IPR013260">
    <property type="entry name" value="mRNA_splic_SYF2"/>
</dbReference>
<dbReference type="Pfam" id="PF08231">
    <property type="entry name" value="SYF2"/>
    <property type="match status" value="1"/>
</dbReference>
<sequence>MNILRYLPGDRKCSPYLNATNHIVNWTQADNKYSKMNDLMEIEKKLKSLRKQKVEVSIRNKKAIIAEEKKNSERRVYSMADDGEDKARSNKSEPEDPIKLANYSIREYEKWEAKTQNSRHNKSVMGDFQTIAKNSYKKEVDALPKDISHPLKGGITEDGKVQVEDNPELVEKMVNDLNERSKKRYMVRKQKLDKQNKINLDDGFINDKNKRFNAKLNSEFK</sequence>
<comment type="function">
    <text evidence="1">Involved in pre-mRNA splicing.</text>
</comment>
<comment type="subunit">
    <text evidence="1">Associated with the spliceosome.</text>
</comment>
<comment type="subcellular location">
    <subcellularLocation>
        <location evidence="1">Nucleus</location>
    </subcellularLocation>
</comment>
<comment type="similarity">
    <text evidence="4">Belongs to the SYF2 family.</text>
</comment>
<organism>
    <name type="scientific">Kluyveromyces lactis (strain ATCC 8585 / CBS 2359 / DSM 70799 / NBRC 1267 / NRRL Y-1140 / WM37)</name>
    <name type="common">Yeast</name>
    <name type="synonym">Candida sphaerica</name>
    <dbReference type="NCBI Taxonomy" id="284590"/>
    <lineage>
        <taxon>Eukaryota</taxon>
        <taxon>Fungi</taxon>
        <taxon>Dikarya</taxon>
        <taxon>Ascomycota</taxon>
        <taxon>Saccharomycotina</taxon>
        <taxon>Saccharomycetes</taxon>
        <taxon>Saccharomycetales</taxon>
        <taxon>Saccharomycetaceae</taxon>
        <taxon>Kluyveromyces</taxon>
    </lineage>
</organism>
<keyword id="KW-0175">Coiled coil</keyword>
<keyword id="KW-0507">mRNA processing</keyword>
<keyword id="KW-0508">mRNA splicing</keyword>
<keyword id="KW-0539">Nucleus</keyword>
<keyword id="KW-1185">Reference proteome</keyword>
<keyword id="KW-0747">Spliceosome</keyword>